<organism>
    <name type="scientific">Saccharomyces cerevisiae (strain ATCC 204508 / S288c)</name>
    <name type="common">Baker's yeast</name>
    <dbReference type="NCBI Taxonomy" id="559292"/>
    <lineage>
        <taxon>Eukaryota</taxon>
        <taxon>Fungi</taxon>
        <taxon>Dikarya</taxon>
        <taxon>Ascomycota</taxon>
        <taxon>Saccharomycotina</taxon>
        <taxon>Saccharomycetes</taxon>
        <taxon>Saccharomycetales</taxon>
        <taxon>Saccharomycetaceae</taxon>
        <taxon>Saccharomyces</taxon>
    </lineage>
</organism>
<feature type="chain" id="PRO_0000249911" description="tRNA (uracil-O(2)-)-methyltransferase">
    <location>
        <begin position="1"/>
        <end position="567"/>
    </location>
</feature>
<feature type="modified residue" description="Phosphoserine" evidence="6 7 8">
    <location>
        <position position="107"/>
    </location>
</feature>
<sequence length="567" mass="64855">MTGDGSAHISKNNQNQHKDRFKFIVNDKSILGPQWLSLYQTDGKVTFAKSHFEQAMMNVIREPNINSTVILRADILKEINHAAEAGSEPKFDESVLKKFEIDNGNESGEEDVKKINIEDLNIRSCETSESLKLSPVHEFVRRIIPRNFYKDAIINQTCLILNSKDPNFQETSLIVYTPHINSEKDCPFYIPRTQSVGILLHQSVLSVHYIPFPEDKTAFTDESERVVRTAYRLLQTANKHSKGVMQGYEKRVNHDQVVNKVNFQNTYIVLKKKYSKFLVENWAESTDPKKHVFEDIAIAAFLIELWIKVYGPDFRSKMQFRDLGCGNGALCYILLSESIKGLGIDARKRKSWSIYPPEVQSSLKEQVIIPSILLRPHPALKRQVPHLEHNGRFFPVKVTHEVIAPATVVYSSEDLLKSPQVNTAEFPPDTFIIGNHSDELTCWIPLLGHPYMVIPCCSHNFSGQRVRFNVRKRSPRSNEIKNQNNSKSTYSGLVDHVEYISSRVGWKVEKEMLRIPSTRNAAIIGVENATLKHFPTQAVYDMIWEDGGAEGWIQNTMSLLKRNPRNH</sequence>
<protein>
    <recommendedName>
        <fullName>tRNA (uracil-O(2)-)-methyltransferase</fullName>
        <ecNumber>2.1.1.211</ecNumber>
    </recommendedName>
    <alternativeName>
        <fullName>tRNA(Ser) (uridine(44)-2'-O)-methyltransferase</fullName>
        <shortName>tRNA Um(44) 2'-O-methyltransferase</shortName>
    </alternativeName>
</protein>
<accession>Q02648</accession>
<accession>D6W3Y3</accession>
<accession>Q03090</accession>
<accession>Q2XN15</accession>
<gene>
    <name type="primary">TRM44</name>
    <name type="ordered locus">YPL030W</name>
</gene>
<proteinExistence type="evidence at protein level"/>
<name>TRM44_YEAST</name>
<keyword id="KW-0963">Cytoplasm</keyword>
<keyword id="KW-0489">Methyltransferase</keyword>
<keyword id="KW-0597">Phosphoprotein</keyword>
<keyword id="KW-1185">Reference proteome</keyword>
<keyword id="KW-0949">S-adenosyl-L-methionine</keyword>
<keyword id="KW-0808">Transferase</keyword>
<keyword id="KW-0819">tRNA processing</keyword>
<evidence type="ECO:0000269" key="1">
    <source>
    </source>
</evidence>
<evidence type="ECO:0000269" key="2">
    <source>
    </source>
</evidence>
<evidence type="ECO:0000269" key="3">
    <source>
    </source>
</evidence>
<evidence type="ECO:0000269" key="4">
    <source>
    </source>
</evidence>
<evidence type="ECO:0000305" key="5"/>
<evidence type="ECO:0007744" key="6">
    <source>
    </source>
</evidence>
<evidence type="ECO:0007744" key="7">
    <source>
    </source>
</evidence>
<evidence type="ECO:0007744" key="8">
    <source>
    </source>
</evidence>
<reference key="1">
    <citation type="journal article" date="1997" name="Nature">
        <title>The nucleotide sequence of Saccharomyces cerevisiae chromosome XVI.</title>
        <authorList>
            <person name="Bussey H."/>
            <person name="Storms R.K."/>
            <person name="Ahmed A."/>
            <person name="Albermann K."/>
            <person name="Allen E."/>
            <person name="Ansorge W."/>
            <person name="Araujo R."/>
            <person name="Aparicio A."/>
            <person name="Barrell B.G."/>
            <person name="Badcock K."/>
            <person name="Benes V."/>
            <person name="Botstein D."/>
            <person name="Bowman S."/>
            <person name="Brueckner M."/>
            <person name="Carpenter J."/>
            <person name="Cherry J.M."/>
            <person name="Chung E."/>
            <person name="Churcher C.M."/>
            <person name="Coster F."/>
            <person name="Davis K."/>
            <person name="Davis R.W."/>
            <person name="Dietrich F.S."/>
            <person name="Delius H."/>
            <person name="DiPaolo T."/>
            <person name="Dubois E."/>
            <person name="Duesterhoeft A."/>
            <person name="Duncan M."/>
            <person name="Floeth M."/>
            <person name="Fortin N."/>
            <person name="Friesen J.D."/>
            <person name="Fritz C."/>
            <person name="Goffeau A."/>
            <person name="Hall J."/>
            <person name="Hebling U."/>
            <person name="Heumann K."/>
            <person name="Hilbert H."/>
            <person name="Hillier L.W."/>
            <person name="Hunicke-Smith S."/>
            <person name="Hyman R.W."/>
            <person name="Johnston M."/>
            <person name="Kalman S."/>
            <person name="Kleine K."/>
            <person name="Komp C."/>
            <person name="Kurdi O."/>
            <person name="Lashkari D."/>
            <person name="Lew H."/>
            <person name="Lin A."/>
            <person name="Lin D."/>
            <person name="Louis E.J."/>
            <person name="Marathe R."/>
            <person name="Messenguy F."/>
            <person name="Mewes H.-W."/>
            <person name="Mirtipati S."/>
            <person name="Moestl D."/>
            <person name="Mueller-Auer S."/>
            <person name="Namath A."/>
            <person name="Nentwich U."/>
            <person name="Oefner P."/>
            <person name="Pearson D."/>
            <person name="Petel F.X."/>
            <person name="Pohl T.M."/>
            <person name="Purnelle B."/>
            <person name="Rajandream M.A."/>
            <person name="Rechmann S."/>
            <person name="Rieger M."/>
            <person name="Riles L."/>
            <person name="Roberts D."/>
            <person name="Schaefer M."/>
            <person name="Scharfe M."/>
            <person name="Scherens B."/>
            <person name="Schramm S."/>
            <person name="Schroeder M."/>
            <person name="Sdicu A.-M."/>
            <person name="Tettelin H."/>
            <person name="Urrestarazu L.A."/>
            <person name="Ushinsky S."/>
            <person name="Vierendeels F."/>
            <person name="Vissers S."/>
            <person name="Voss H."/>
            <person name="Walsh S.V."/>
            <person name="Wambutt R."/>
            <person name="Wang Y."/>
            <person name="Wedler E."/>
            <person name="Wedler H."/>
            <person name="Winnett E."/>
            <person name="Zhong W.-W."/>
            <person name="Zollner A."/>
            <person name="Vo D.H."/>
            <person name="Hani J."/>
        </authorList>
    </citation>
    <scope>NUCLEOTIDE SEQUENCE [LARGE SCALE GENOMIC DNA]</scope>
    <source>
        <strain>ATCC 204508 / S288c</strain>
    </source>
</reference>
<reference key="2">
    <citation type="journal article" date="2014" name="G3 (Bethesda)">
        <title>The reference genome sequence of Saccharomyces cerevisiae: Then and now.</title>
        <authorList>
            <person name="Engel S.R."/>
            <person name="Dietrich F.S."/>
            <person name="Fisk D.G."/>
            <person name="Binkley G."/>
            <person name="Balakrishnan R."/>
            <person name="Costanzo M.C."/>
            <person name="Dwight S.S."/>
            <person name="Hitz B.C."/>
            <person name="Karra K."/>
            <person name="Nash R.S."/>
            <person name="Weng S."/>
            <person name="Wong E.D."/>
            <person name="Lloyd P."/>
            <person name="Skrzypek M.S."/>
            <person name="Miyasato S.R."/>
            <person name="Simison M."/>
            <person name="Cherry J.M."/>
        </authorList>
    </citation>
    <scope>GENOME REANNOTATION</scope>
    <source>
        <strain>ATCC 204508 / S288c</strain>
    </source>
</reference>
<reference key="3">
    <citation type="journal article" date="2003" name="Nature">
        <title>Global analysis of protein localization in budding yeast.</title>
        <authorList>
            <person name="Huh W.-K."/>
            <person name="Falvo J.V."/>
            <person name="Gerke L.C."/>
            <person name="Carroll A.S."/>
            <person name="Howson R.W."/>
            <person name="Weissman J.S."/>
            <person name="O'Shea E.K."/>
        </authorList>
    </citation>
    <scope>SUBCELLULAR LOCATION [LARGE SCALE ANALYSIS]</scope>
</reference>
<reference key="4">
    <citation type="journal article" date="2003" name="Nature">
        <title>Global analysis of protein expression in yeast.</title>
        <authorList>
            <person name="Ghaemmaghami S."/>
            <person name="Huh W.-K."/>
            <person name="Bower K."/>
            <person name="Howson R.W."/>
            <person name="Belle A."/>
            <person name="Dephoure N."/>
            <person name="O'Shea E.K."/>
            <person name="Weissman J.S."/>
        </authorList>
    </citation>
    <scope>LEVEL OF PROTEIN EXPRESSION [LARGE SCALE ANALYSIS]</scope>
</reference>
<reference key="5">
    <citation type="journal article" date="2007" name="J. Proteome Res.">
        <title>Large-scale phosphorylation analysis of alpha-factor-arrested Saccharomyces cerevisiae.</title>
        <authorList>
            <person name="Li X."/>
            <person name="Gerber S.A."/>
            <person name="Rudner A.D."/>
            <person name="Beausoleil S.A."/>
            <person name="Haas W."/>
            <person name="Villen J."/>
            <person name="Elias J.E."/>
            <person name="Gygi S.P."/>
        </authorList>
    </citation>
    <scope>PHOSPHORYLATION [LARGE SCALE ANALYSIS] AT SER-107</scope>
    <scope>IDENTIFICATION BY MASS SPECTROMETRY [LARGE SCALE ANALYSIS]</scope>
    <source>
        <strain>ADR376</strain>
    </source>
</reference>
<reference key="6">
    <citation type="journal article" date="2008" name="Mol. Cell. Proteomics">
        <title>A multidimensional chromatography technology for in-depth phosphoproteome analysis.</title>
        <authorList>
            <person name="Albuquerque C.P."/>
            <person name="Smolka M.B."/>
            <person name="Payne S.H."/>
            <person name="Bafna V."/>
            <person name="Eng J."/>
            <person name="Zhou H."/>
        </authorList>
    </citation>
    <scope>PHOSPHORYLATION [LARGE SCALE ANALYSIS] AT SER-107</scope>
    <scope>IDENTIFICATION BY MASS SPECTROMETRY [LARGE SCALE ANALYSIS]</scope>
</reference>
<reference key="7">
    <citation type="journal article" date="2008" name="RNA">
        <title>Identification of yeast tRNA Um(44) 2'-O-methyltransferase (Trm44) and demonstration of a Trm44 role in sustaining levels of specific tRNA(Ser) species.</title>
        <authorList>
            <person name="Kotelawala L."/>
            <person name="Grayhack E.J."/>
            <person name="Phizicky E.M."/>
        </authorList>
    </citation>
    <scope>FUNCTION</scope>
</reference>
<reference key="8">
    <citation type="journal article" date="2009" name="Science">
        <title>Global analysis of Cdk1 substrate phosphorylation sites provides insights into evolution.</title>
        <authorList>
            <person name="Holt L.J."/>
            <person name="Tuch B.B."/>
            <person name="Villen J."/>
            <person name="Johnson A.D."/>
            <person name="Gygi S.P."/>
            <person name="Morgan D.O."/>
        </authorList>
    </citation>
    <scope>PHOSPHORYLATION [LARGE SCALE ANALYSIS] AT SER-107</scope>
    <scope>IDENTIFICATION BY MASS SPECTROMETRY [LARGE SCALE ANALYSIS]</scope>
</reference>
<reference key="9">
    <citation type="journal article" date="2020" name="PLoS ONE">
        <title>2'-O-ribose methylation of transfer RNA promotes recovery from oxidative stress in Saccharomyces cerevisiae.</title>
        <authorList>
            <person name="Endres L."/>
            <person name="Rose R.E."/>
            <person name="Doyle F."/>
            <person name="Rahn T."/>
            <person name="Lee B."/>
            <person name="Seaman J."/>
            <person name="McIntyre W.D."/>
            <person name="Fabris D."/>
        </authorList>
    </citation>
    <scope>DISRUPTION PHENOTYPE</scope>
</reference>
<dbReference type="EC" id="2.1.1.211"/>
<dbReference type="EMBL" id="U36624">
    <property type="protein sequence ID" value="AAB68157.1"/>
    <property type="molecule type" value="Genomic_DNA"/>
</dbReference>
<dbReference type="EMBL" id="U44030">
    <property type="protein sequence ID" value="AAB68189.1"/>
    <property type="molecule type" value="Genomic_DNA"/>
</dbReference>
<dbReference type="EMBL" id="BK006949">
    <property type="protein sequence ID" value="DAA11399.1"/>
    <property type="molecule type" value="Genomic_DNA"/>
</dbReference>
<dbReference type="PIR" id="S63452">
    <property type="entry name" value="S63452"/>
</dbReference>
<dbReference type="RefSeq" id="NP_015295.1">
    <property type="nucleotide sequence ID" value="NM_001183844.1"/>
</dbReference>
<dbReference type="BioGRID" id="36148">
    <property type="interactions" value="125"/>
</dbReference>
<dbReference type="FunCoup" id="Q02648">
    <property type="interactions" value="124"/>
</dbReference>
<dbReference type="IntAct" id="Q02648">
    <property type="interactions" value="5"/>
</dbReference>
<dbReference type="STRING" id="4932.YPL030W"/>
<dbReference type="iPTMnet" id="Q02648"/>
<dbReference type="PaxDb" id="4932-YPL030W"/>
<dbReference type="PeptideAtlas" id="Q02648"/>
<dbReference type="EnsemblFungi" id="YPL030W_mRNA">
    <property type="protein sequence ID" value="YPL030W"/>
    <property type="gene ID" value="YPL030W"/>
</dbReference>
<dbReference type="GeneID" id="856077"/>
<dbReference type="KEGG" id="sce:YPL030W"/>
<dbReference type="AGR" id="SGD:S000005951"/>
<dbReference type="SGD" id="S000005951">
    <property type="gene designation" value="TRM44"/>
</dbReference>
<dbReference type="VEuPathDB" id="FungiDB:YPL030W"/>
<dbReference type="eggNOG" id="KOG3790">
    <property type="taxonomic scope" value="Eukaryota"/>
</dbReference>
<dbReference type="GeneTree" id="ENSGT00390000000645"/>
<dbReference type="HOGENOM" id="CLU_018580_2_0_1"/>
<dbReference type="InParanoid" id="Q02648"/>
<dbReference type="OMA" id="IREPNIN"/>
<dbReference type="OrthoDB" id="10047021at2759"/>
<dbReference type="BioCyc" id="MetaCyc:G3O-33945-MONOMER"/>
<dbReference type="BioCyc" id="YEAST:G3O-33945-MONOMER"/>
<dbReference type="BRENDA" id="2.1.1.211">
    <property type="organism ID" value="984"/>
</dbReference>
<dbReference type="BioGRID-ORCS" id="856077">
    <property type="hits" value="0 hits in 10 CRISPR screens"/>
</dbReference>
<dbReference type="PRO" id="PR:Q02648"/>
<dbReference type="Proteomes" id="UP000002311">
    <property type="component" value="Chromosome XVI"/>
</dbReference>
<dbReference type="RNAct" id="Q02648">
    <property type="molecule type" value="protein"/>
</dbReference>
<dbReference type="GO" id="GO:0005737">
    <property type="term" value="C:cytoplasm"/>
    <property type="evidence" value="ECO:0007005"/>
    <property type="project" value="SGD"/>
</dbReference>
<dbReference type="GO" id="GO:0005829">
    <property type="term" value="C:cytosol"/>
    <property type="evidence" value="ECO:0000304"/>
    <property type="project" value="Reactome"/>
</dbReference>
<dbReference type="GO" id="GO:0016300">
    <property type="term" value="F:tRNA (uridine) methyltransferase activity"/>
    <property type="evidence" value="ECO:0000314"/>
    <property type="project" value="SGD"/>
</dbReference>
<dbReference type="GO" id="GO:0141101">
    <property type="term" value="F:tRNA(Ser) (uridine(44)-2'-O-)-methyltransferase activity"/>
    <property type="evidence" value="ECO:0000304"/>
    <property type="project" value="Reactome"/>
</dbReference>
<dbReference type="GO" id="GO:0030488">
    <property type="term" value="P:tRNA methylation"/>
    <property type="evidence" value="ECO:0000314"/>
    <property type="project" value="SGD"/>
</dbReference>
<dbReference type="GO" id="GO:0002128">
    <property type="term" value="P:tRNA nucleoside ribose methylation"/>
    <property type="evidence" value="ECO:0000315"/>
    <property type="project" value="SGD"/>
</dbReference>
<dbReference type="InterPro" id="IPR011671">
    <property type="entry name" value="tRNA_uracil_MeTrfase"/>
</dbReference>
<dbReference type="PANTHER" id="PTHR21210">
    <property type="entry name" value="TRNA (URACIL-O(2)-)-METHYLTRANSFERASE-RELATED"/>
    <property type="match status" value="1"/>
</dbReference>
<dbReference type="PANTHER" id="PTHR21210:SF0">
    <property type="entry name" value="TRNA (URACIL-O(2)-)-METHYLTRANSFERASE-RELATED"/>
    <property type="match status" value="1"/>
</dbReference>
<dbReference type="Pfam" id="PF07757">
    <property type="entry name" value="AdoMet_MTase"/>
    <property type="match status" value="1"/>
</dbReference>
<comment type="function">
    <text evidence="3">tRNA (uracil-O(2)-)-methyltransferase, which catalyzes the formation of O(2)-methyluracil at position 44 (Um44) in tRNA(Ser).</text>
</comment>
<comment type="catalytic activity">
    <reaction>
        <text>uridine(44) in tRNA(Ser) + S-adenosyl-L-methionine = 2'-O-methyluridine(44) in tRNA(Ser) + S-adenosyl-L-homocysteine + H(+)</text>
        <dbReference type="Rhea" id="RHEA:43100"/>
        <dbReference type="Rhea" id="RHEA-COMP:10339"/>
        <dbReference type="Rhea" id="RHEA-COMP:10340"/>
        <dbReference type="ChEBI" id="CHEBI:15378"/>
        <dbReference type="ChEBI" id="CHEBI:57856"/>
        <dbReference type="ChEBI" id="CHEBI:59789"/>
        <dbReference type="ChEBI" id="CHEBI:65315"/>
        <dbReference type="ChEBI" id="CHEBI:74478"/>
        <dbReference type="EC" id="2.1.1.211"/>
    </reaction>
</comment>
<comment type="subcellular location">
    <subcellularLocation>
        <location evidence="1">Cytoplasm</location>
    </subcellularLocation>
</comment>
<comment type="disruption phenotype">
    <text evidence="4">Increases cellular ROS (reactive oxygen species) levels (PubMed:32053677). Increases RNA level of TRM3, TRM7, and TRM13 (PubMed:32053677). Sensitive to oxidate stress induced by rotenone (PubMed:32053677). Mildly slows cell population growth (PubMed:32053677).</text>
</comment>
<comment type="miscellaneous">
    <text evidence="2">Present with 7720 molecules/cell in log phase SD medium.</text>
</comment>
<comment type="similarity">
    <text evidence="5">Belongs to the TRM44 family.</text>
</comment>